<name>IDH1_PSYS3</name>
<comment type="function">
    <text evidence="2">Catalyzes the oxidative decarboxylation of isocitrate to 2-oxoglutarate and carbon dioxide with the concomitant reduction of NADP(+) (PubMed:34101864). Cannot use NAD(+) (PubMed:34101864).</text>
</comment>
<comment type="catalytic activity">
    <reaction evidence="2">
        <text>D-threo-isocitrate + NADP(+) = 2-oxoglutarate + CO2 + NADPH</text>
        <dbReference type="Rhea" id="RHEA:19629"/>
        <dbReference type="ChEBI" id="CHEBI:15562"/>
        <dbReference type="ChEBI" id="CHEBI:16526"/>
        <dbReference type="ChEBI" id="CHEBI:16810"/>
        <dbReference type="ChEBI" id="CHEBI:57783"/>
        <dbReference type="ChEBI" id="CHEBI:58349"/>
        <dbReference type="EC" id="1.1.1.42"/>
    </reaction>
</comment>
<comment type="cofactor">
    <cofactor evidence="2">
        <name>Mg(2+)</name>
        <dbReference type="ChEBI" id="CHEBI:18420"/>
    </cofactor>
    <cofactor evidence="2">
        <name>Mn(2+)</name>
        <dbReference type="ChEBI" id="CHEBI:29035"/>
    </cofactor>
    <text evidence="1 2">Binds 1 Mg(2+) or Mn(2+) ion per subunit (By similarity). Mn(2+) is the most effective divalent cation in vitro, but the enzyme can also use Mg(2+), Co(2+), Zn(2+) and Ni(2+), with lower efficiency (PubMed:34101864).</text>
</comment>
<comment type="activity regulation">
    <text evidence="2">IDH activity is not significantly affected by monovalent cations (PubMed:34101864). The combined addition of Mn(2+) and another divalent cation results in the decrease of the activity (PubMed:34101864).</text>
</comment>
<comment type="biophysicochemical properties">
    <phDependence>
        <text evidence="2">Optimum pH is 7.5.</text>
    </phDependence>
    <temperatureDependence>
        <text evidence="2">Optimum temperature is 55 degrees Celsius (PubMed:34101864). Maintains 90% of its maximum activity after incubation for 10 min at 50 degrees Celsius (PubMed:34101864).</text>
    </temperatureDependence>
</comment>
<comment type="subunit">
    <text evidence="2">Homodimer.</text>
</comment>
<comment type="induction">
    <text evidence="2">Expression is not detected at both the levels of transcription and translation under standard laboratory conditions.</text>
</comment>
<comment type="similarity">
    <text evidence="4">Belongs to the isocitrate and isopropylmalate dehydrogenases family.</text>
</comment>
<dbReference type="EC" id="1.1.1.42" evidence="2"/>
<dbReference type="EMBL" id="LC498641">
    <property type="protein sequence ID" value="BBN50998.1"/>
    <property type="molecule type" value="Genomic_DNA"/>
</dbReference>
<dbReference type="SMR" id="A0A5A4WIX0"/>
<dbReference type="GO" id="GO:0004450">
    <property type="term" value="F:isocitrate dehydrogenase (NADP+) activity"/>
    <property type="evidence" value="ECO:0007669"/>
    <property type="project" value="UniProtKB-EC"/>
</dbReference>
<dbReference type="GO" id="GO:0000287">
    <property type="term" value="F:magnesium ion binding"/>
    <property type="evidence" value="ECO:0007669"/>
    <property type="project" value="InterPro"/>
</dbReference>
<dbReference type="GO" id="GO:0051287">
    <property type="term" value="F:NAD binding"/>
    <property type="evidence" value="ECO:0007669"/>
    <property type="project" value="InterPro"/>
</dbReference>
<dbReference type="GO" id="GO:0006097">
    <property type="term" value="P:glyoxylate cycle"/>
    <property type="evidence" value="ECO:0007669"/>
    <property type="project" value="UniProtKB-KW"/>
</dbReference>
<dbReference type="GO" id="GO:0006099">
    <property type="term" value="P:tricarboxylic acid cycle"/>
    <property type="evidence" value="ECO:0007669"/>
    <property type="project" value="UniProtKB-KW"/>
</dbReference>
<dbReference type="Gene3D" id="3.40.718.10">
    <property type="entry name" value="Isopropylmalate Dehydrogenase"/>
    <property type="match status" value="1"/>
</dbReference>
<dbReference type="InterPro" id="IPR019818">
    <property type="entry name" value="IsoCit/isopropylmalate_DH_CS"/>
</dbReference>
<dbReference type="InterPro" id="IPR004439">
    <property type="entry name" value="Isocitrate_DH_NADP_dimer_prok"/>
</dbReference>
<dbReference type="InterPro" id="IPR024084">
    <property type="entry name" value="IsoPropMal-DH-like_dom"/>
</dbReference>
<dbReference type="NCBIfam" id="NF005425">
    <property type="entry name" value="PRK07006.1"/>
    <property type="match status" value="1"/>
</dbReference>
<dbReference type="NCBIfam" id="TIGR00183">
    <property type="entry name" value="prok_nadp_idh"/>
    <property type="match status" value="1"/>
</dbReference>
<dbReference type="PANTHER" id="PTHR43504">
    <property type="entry name" value="ISOCITRATE DEHYDROGENASE [NADP]"/>
    <property type="match status" value="1"/>
</dbReference>
<dbReference type="PANTHER" id="PTHR43504:SF1">
    <property type="entry name" value="ISOCITRATE DEHYDROGENASE [NADP]"/>
    <property type="match status" value="1"/>
</dbReference>
<dbReference type="Pfam" id="PF00180">
    <property type="entry name" value="Iso_dh"/>
    <property type="match status" value="1"/>
</dbReference>
<dbReference type="SMART" id="SM01329">
    <property type="entry name" value="Iso_dh"/>
    <property type="match status" value="1"/>
</dbReference>
<dbReference type="SUPFAM" id="SSF53659">
    <property type="entry name" value="Isocitrate/Isopropylmalate dehydrogenase-like"/>
    <property type="match status" value="1"/>
</dbReference>
<dbReference type="PROSITE" id="PS00470">
    <property type="entry name" value="IDH_IMDH"/>
    <property type="match status" value="1"/>
</dbReference>
<keyword id="KW-0329">Glyoxylate bypass</keyword>
<keyword id="KW-0460">Magnesium</keyword>
<keyword id="KW-0464">Manganese</keyword>
<keyword id="KW-0479">Metal-binding</keyword>
<keyword id="KW-0521">NADP</keyword>
<keyword id="KW-0560">Oxidoreductase</keyword>
<keyword id="KW-0816">Tricarboxylic acid cycle</keyword>
<accession>A0A5A4WIX0</accession>
<evidence type="ECO:0000250" key="1">
    <source>
        <dbReference type="UniProtKB" id="P08200"/>
    </source>
</evidence>
<evidence type="ECO:0000269" key="2">
    <source>
    </source>
</evidence>
<evidence type="ECO:0000303" key="3">
    <source>
    </source>
</evidence>
<evidence type="ECO:0000305" key="4"/>
<protein>
    <recommendedName>
        <fullName evidence="4">Isocitrate dehydrogenase [NADP] 1</fullName>
        <shortName evidence="3">IDH 1</shortName>
        <ecNumber evidence="2">1.1.1.42</ecNumber>
    </recommendedName>
</protein>
<organism>
    <name type="scientific">Psychrobacter sp. (strain 13A)</name>
    <dbReference type="NCBI Taxonomy" id="2607668"/>
    <lineage>
        <taxon>Bacteria</taxon>
        <taxon>Pseudomonadati</taxon>
        <taxon>Pseudomonadota</taxon>
        <taxon>Gammaproteobacteria</taxon>
        <taxon>Moraxellales</taxon>
        <taxon>Moraxellaceae</taxon>
        <taxon>Psychrobacter</taxon>
    </lineage>
</organism>
<feature type="chain" id="PRO_0000461068" description="Isocitrate dehydrogenase [NADP] 1">
    <location>
        <begin position="1"/>
        <end position="419"/>
    </location>
</feature>
<feature type="binding site" evidence="1">
    <location>
        <position position="105"/>
    </location>
    <ligand>
        <name>NADP(+)</name>
        <dbReference type="ChEBI" id="CHEBI:58349"/>
    </ligand>
</feature>
<feature type="binding site" evidence="1">
    <location>
        <position position="114"/>
    </location>
    <ligand>
        <name>D-threo-isocitrate</name>
        <dbReference type="ChEBI" id="CHEBI:15562"/>
    </ligand>
</feature>
<feature type="binding site" evidence="1">
    <location>
        <position position="116"/>
    </location>
    <ligand>
        <name>D-threo-isocitrate</name>
        <dbReference type="ChEBI" id="CHEBI:15562"/>
    </ligand>
</feature>
<feature type="binding site" evidence="1">
    <location>
        <position position="120"/>
    </location>
    <ligand>
        <name>D-threo-isocitrate</name>
        <dbReference type="ChEBI" id="CHEBI:15562"/>
    </ligand>
</feature>
<feature type="binding site" evidence="1">
    <location>
        <position position="130"/>
    </location>
    <ligand>
        <name>D-threo-isocitrate</name>
        <dbReference type="ChEBI" id="CHEBI:15562"/>
    </ligand>
</feature>
<feature type="binding site" evidence="1">
    <location>
        <position position="154"/>
    </location>
    <ligand>
        <name>D-threo-isocitrate</name>
        <dbReference type="ChEBI" id="CHEBI:15562"/>
    </ligand>
</feature>
<feature type="binding site" evidence="1">
    <location>
        <position position="308"/>
    </location>
    <ligand>
        <name>Mg(2+)</name>
        <dbReference type="ChEBI" id="CHEBI:18420"/>
    </ligand>
</feature>
<feature type="binding site" evidence="1">
    <location>
        <begin position="340"/>
        <end position="346"/>
    </location>
    <ligand>
        <name>NADP(+)</name>
        <dbReference type="ChEBI" id="CHEBI:58349"/>
    </ligand>
</feature>
<feature type="binding site" evidence="1">
    <location>
        <position position="353"/>
    </location>
    <ligand>
        <name>NADP(+)</name>
        <dbReference type="ChEBI" id="CHEBI:58349"/>
    </ligand>
</feature>
<feature type="binding site" evidence="1">
    <location>
        <position position="392"/>
    </location>
    <ligand>
        <name>NADP(+)</name>
        <dbReference type="ChEBI" id="CHEBI:58349"/>
    </ligand>
</feature>
<feature type="binding site" evidence="1">
    <location>
        <position position="396"/>
    </location>
    <ligand>
        <name>NADP(+)</name>
        <dbReference type="ChEBI" id="CHEBI:58349"/>
    </ligand>
</feature>
<feature type="site" description="Critical for catalysis" evidence="1">
    <location>
        <position position="161"/>
    </location>
</feature>
<feature type="site" description="Critical for catalysis" evidence="1">
    <location>
        <position position="231"/>
    </location>
</feature>
<proteinExistence type="evidence at protein level"/>
<sequence>MPYDKVIVPRDGAKITVNADLSLNVPNHPIIPFIEGDGIGVDITPVMIKVVDAAVAKAYQGKKSIVWMEVYCGEKASKIYDGEYMPTETLEILREYVISIKGPLTTPVGGGMRSLNVALRQELDLYVCQRPVRWFEGVPSPVHSPELTDMVIFRENSEDIYAGIEWKAGSDDAKKVIKFLKEEMGVTKIRFSDDCGIGIKPVSKEGSQRLVRKAIQHAIDNDLPSVTLVHKGNIMKFTEGAFKEWGYELAAERFGAELLDGGPWMTMKNPKTGNDIIIKDVIADAFLQQILMRPAEYSVVATLNLNGDYISDALAAEVGGIGIAPGANKGGSIAVYEATHGTAPKYAGQDKVNPGSLILSAEMMLRDMGWIEAADLVIAGIKGAIKNKTVTYDFERLMPDAILLSSSEFGKAIIKHMDA</sequence>
<reference key="1">
    <citation type="journal article" date="2021" name="J. Basic Microbiol.">
        <title>NADP+ -dependent isocitrate dehydrogenase isozymes from a psychrotrophic bacterium, Psychrobacter sp. strain 13A.</title>
        <authorList>
            <person name="Komura T."/>
            <person name="Takada Y."/>
        </authorList>
    </citation>
    <scope>NUCLEOTIDE SEQUENCE [GENOMIC DNA]</scope>
    <scope>FUNCTION</scope>
    <scope>CATALYTIC ACTIVITY</scope>
    <scope>COFACTOR</scope>
    <scope>ACTIVITY REGULATION</scope>
    <scope>BIOPHYSICOCHEMICAL PROPERTIES</scope>
    <scope>SUBUNIT</scope>
    <scope>INDUCTION</scope>
    <source>
        <strain>13A</strain>
    </source>
</reference>
<gene>
    <name evidence="3" type="primary">13AIDH-D</name>
</gene>